<evidence type="ECO:0000250" key="1"/>
<evidence type="ECO:0000305" key="2"/>
<dbReference type="EMBL" id="Z68235">
    <property type="protein sequence ID" value="CAA92533.1"/>
    <property type="molecule type" value="Genomic_DNA"/>
</dbReference>
<dbReference type="SMR" id="O19990"/>
<dbReference type="GO" id="GO:0009507">
    <property type="term" value="C:chloroplast"/>
    <property type="evidence" value="ECO:0007669"/>
    <property type="project" value="UniProtKB-SubCell"/>
</dbReference>
<dbReference type="GO" id="GO:0015935">
    <property type="term" value="C:small ribosomal subunit"/>
    <property type="evidence" value="ECO:0007669"/>
    <property type="project" value="InterPro"/>
</dbReference>
<dbReference type="GO" id="GO:0019843">
    <property type="term" value="F:rRNA binding"/>
    <property type="evidence" value="ECO:0007669"/>
    <property type="project" value="UniProtKB-KW"/>
</dbReference>
<dbReference type="GO" id="GO:0003735">
    <property type="term" value="F:structural constituent of ribosome"/>
    <property type="evidence" value="ECO:0007669"/>
    <property type="project" value="InterPro"/>
</dbReference>
<dbReference type="GO" id="GO:0042274">
    <property type="term" value="P:ribosomal small subunit biogenesis"/>
    <property type="evidence" value="ECO:0007669"/>
    <property type="project" value="TreeGrafter"/>
</dbReference>
<dbReference type="GO" id="GO:0006412">
    <property type="term" value="P:translation"/>
    <property type="evidence" value="ECO:0007669"/>
    <property type="project" value="InterPro"/>
</dbReference>
<dbReference type="CDD" id="cd00165">
    <property type="entry name" value="S4"/>
    <property type="match status" value="1"/>
</dbReference>
<dbReference type="FunFam" id="1.10.1050.10:FF:000002">
    <property type="entry name" value="30S ribosomal protein S4, chloroplastic"/>
    <property type="match status" value="1"/>
</dbReference>
<dbReference type="FunFam" id="3.10.290.10:FF:000081">
    <property type="entry name" value="30S ribosomal protein S4, chloroplastic"/>
    <property type="match status" value="1"/>
</dbReference>
<dbReference type="Gene3D" id="1.10.1050.10">
    <property type="entry name" value="Ribosomal Protein S4 Delta 41, Chain A, domain 1"/>
    <property type="match status" value="1"/>
</dbReference>
<dbReference type="Gene3D" id="3.10.290.10">
    <property type="entry name" value="RNA-binding S4 domain"/>
    <property type="match status" value="1"/>
</dbReference>
<dbReference type="HAMAP" id="MF_01306_B">
    <property type="entry name" value="Ribosomal_uS4_B"/>
    <property type="match status" value="1"/>
</dbReference>
<dbReference type="InterPro" id="IPR022801">
    <property type="entry name" value="Ribosomal_uS4"/>
</dbReference>
<dbReference type="InterPro" id="IPR005709">
    <property type="entry name" value="Ribosomal_uS4_bac-type"/>
</dbReference>
<dbReference type="InterPro" id="IPR018079">
    <property type="entry name" value="Ribosomal_uS4_CS"/>
</dbReference>
<dbReference type="InterPro" id="IPR001912">
    <property type="entry name" value="Ribosomal_uS4_N"/>
</dbReference>
<dbReference type="InterPro" id="IPR002942">
    <property type="entry name" value="S4_RNA-bd"/>
</dbReference>
<dbReference type="InterPro" id="IPR036986">
    <property type="entry name" value="S4_RNA-bd_sf"/>
</dbReference>
<dbReference type="NCBIfam" id="NF003717">
    <property type="entry name" value="PRK05327.1"/>
    <property type="match status" value="1"/>
</dbReference>
<dbReference type="NCBIfam" id="TIGR01017">
    <property type="entry name" value="rpsD_bact"/>
    <property type="match status" value="1"/>
</dbReference>
<dbReference type="PANTHER" id="PTHR11831">
    <property type="entry name" value="30S 40S RIBOSOMAL PROTEIN"/>
    <property type="match status" value="1"/>
</dbReference>
<dbReference type="PANTHER" id="PTHR11831:SF4">
    <property type="entry name" value="SMALL RIBOSOMAL SUBUNIT PROTEIN US4M"/>
    <property type="match status" value="1"/>
</dbReference>
<dbReference type="Pfam" id="PF00163">
    <property type="entry name" value="Ribosomal_S4"/>
    <property type="match status" value="1"/>
</dbReference>
<dbReference type="Pfam" id="PF01479">
    <property type="entry name" value="S4"/>
    <property type="match status" value="1"/>
</dbReference>
<dbReference type="SMART" id="SM01390">
    <property type="entry name" value="Ribosomal_S4"/>
    <property type="match status" value="1"/>
</dbReference>
<dbReference type="SMART" id="SM00363">
    <property type="entry name" value="S4"/>
    <property type="match status" value="1"/>
</dbReference>
<dbReference type="SUPFAM" id="SSF55174">
    <property type="entry name" value="Alpha-L RNA-binding motif"/>
    <property type="match status" value="1"/>
</dbReference>
<dbReference type="PROSITE" id="PS00632">
    <property type="entry name" value="RIBOSOMAL_S4"/>
    <property type="match status" value="1"/>
</dbReference>
<dbReference type="PROSITE" id="PS50889">
    <property type="entry name" value="S4"/>
    <property type="match status" value="1"/>
</dbReference>
<comment type="function">
    <text evidence="1">One of the primary rRNA binding proteins, it binds directly to 16S rRNA where it nucleates assembly of the body of the 30S subunit.</text>
</comment>
<comment type="function">
    <text evidence="1">With S5 and S12 plays an important role in translational accuracy.</text>
</comment>
<comment type="subunit">
    <text evidence="1">Part of the 30S ribosomal subunit. Contacts protein S5. The interaction surface between S4 and S5 is involved in control of translational fidelity (By similarity).</text>
</comment>
<comment type="subcellular location">
    <subcellularLocation>
        <location>Plastid</location>
        <location>Chloroplast</location>
    </subcellularLocation>
</comment>
<comment type="similarity">
    <text evidence="2">Belongs to the universal ribosomal protein uS4 family.</text>
</comment>
<name>RR4_IRIDM</name>
<organism>
    <name type="scientific">Iris domestica</name>
    <name type="common">Leopard lily</name>
    <name type="synonym">Belamcanda chinensis</name>
    <dbReference type="NCBI Taxonomy" id="58944"/>
    <lineage>
        <taxon>Eukaryota</taxon>
        <taxon>Viridiplantae</taxon>
        <taxon>Streptophyta</taxon>
        <taxon>Embryophyta</taxon>
        <taxon>Tracheophyta</taxon>
        <taxon>Spermatophyta</taxon>
        <taxon>Magnoliopsida</taxon>
        <taxon>Liliopsida</taxon>
        <taxon>Asparagales</taxon>
        <taxon>Iridaceae</taxon>
        <taxon>Iridoideae</taxon>
        <taxon>Irideae</taxon>
        <taxon>Iris</taxon>
    </lineage>
</organism>
<accession>O19990</accession>
<geneLocation type="chloroplast"/>
<keyword id="KW-0150">Chloroplast</keyword>
<keyword id="KW-0934">Plastid</keyword>
<keyword id="KW-0687">Ribonucleoprotein</keyword>
<keyword id="KW-0689">Ribosomal protein</keyword>
<keyword id="KW-0694">RNA-binding</keyword>
<keyword id="KW-0699">rRNA-binding</keyword>
<gene>
    <name type="primary">rps4</name>
</gene>
<proteinExistence type="inferred from homology"/>
<sequence length="182" mass="21048">RFKKIRRLGALPGLTSKRPRSGSDLKNQLRSGKRSQYRIRLEEKQKLRFHYGLTERQLLKYVHIAGKAKGSTGRVLLQLLEMRLDNILFRLGMASTIPGARQLVNHRHILVNGHIVDIPSYRCKPRDIITTKDKQRSKALIQNYIALSPHEELPNHLTIDPFQYKGLVNQIIDSKWIGLKIN</sequence>
<protein>
    <recommendedName>
        <fullName evidence="2">Small ribosomal subunit protein uS4c</fullName>
    </recommendedName>
    <alternativeName>
        <fullName>30S ribosomal protein S4, chloroplastic</fullName>
    </alternativeName>
</protein>
<feature type="chain" id="PRO_0000132543" description="Small ribosomal subunit protein uS4c">
    <location>
        <begin position="1" status="less than"/>
        <end position="182" status="greater than"/>
    </location>
</feature>
<feature type="domain" description="S4 RNA-binding">
    <location>
        <begin position="82"/>
        <end position="143"/>
    </location>
</feature>
<feature type="non-terminal residue">
    <location>
        <position position="1"/>
    </location>
</feature>
<feature type="non-terminal residue">
    <location>
        <position position="182"/>
    </location>
</feature>
<reference key="1">
    <citation type="journal article" date="1997" name="Plant Syst. Evol.">
        <title>Phylogenetic analysis of Iridaceae with parsimony and distance methods using the plastid gene rps4.</title>
        <authorList>
            <person name="Souza-Chies T.T."/>
            <person name="Bittar G."/>
            <person name="Nadot S."/>
            <person name="Carter L."/>
            <person name="Besin E."/>
            <person name="Lejeune B.P."/>
        </authorList>
    </citation>
    <scope>NUCLEOTIDE SEQUENCE [GENOMIC DNA]</scope>
</reference>